<feature type="chain" id="PRO_0000438872" description="ABC-type transporter fsqE">
    <location>
        <begin position="1"/>
        <end position="1285"/>
    </location>
</feature>
<feature type="transmembrane region" description="Helical" evidence="3">
    <location>
        <begin position="57"/>
        <end position="77"/>
    </location>
</feature>
<feature type="transmembrane region" description="Helical" evidence="3">
    <location>
        <begin position="102"/>
        <end position="122"/>
    </location>
</feature>
<feature type="transmembrane region" description="Helical" evidence="3">
    <location>
        <begin position="176"/>
        <end position="196"/>
    </location>
</feature>
<feature type="transmembrane region" description="Helical" evidence="3">
    <location>
        <begin position="203"/>
        <end position="223"/>
    </location>
</feature>
<feature type="transmembrane region" description="Helical" evidence="3">
    <location>
        <begin position="281"/>
        <end position="301"/>
    </location>
</feature>
<feature type="transmembrane region" description="Helical" evidence="3">
    <location>
        <begin position="312"/>
        <end position="332"/>
    </location>
</feature>
<feature type="transmembrane region" description="Helical" evidence="3">
    <location>
        <begin position="707"/>
        <end position="727"/>
    </location>
</feature>
<feature type="transmembrane region" description="Helical" evidence="3">
    <location>
        <begin position="753"/>
        <end position="773"/>
    </location>
</feature>
<feature type="transmembrane region" description="Helical" evidence="3">
    <location>
        <begin position="831"/>
        <end position="851"/>
    </location>
</feature>
<feature type="transmembrane region" description="Helical" evidence="3">
    <location>
        <begin position="855"/>
        <end position="875"/>
    </location>
</feature>
<feature type="transmembrane region" description="Helical" evidence="3">
    <location>
        <begin position="931"/>
        <end position="951"/>
    </location>
</feature>
<feature type="transmembrane region" description="Helical" evidence="3">
    <location>
        <begin position="968"/>
        <end position="988"/>
    </location>
</feature>
<feature type="domain" description="ABC transmembrane type-1 1" evidence="3">
    <location>
        <begin position="54"/>
        <end position="343"/>
    </location>
</feature>
<feature type="domain" description="ABC transporter 1" evidence="2">
    <location>
        <begin position="380"/>
        <end position="622"/>
    </location>
</feature>
<feature type="domain" description="ABC transmembrane type-1 2" evidence="3">
    <location>
        <begin position="713"/>
        <end position="996"/>
    </location>
</feature>
<feature type="domain" description="ABC transporter 2" evidence="2">
    <location>
        <begin position="1043"/>
        <end position="1281"/>
    </location>
</feature>
<feature type="region of interest" description="Disordered" evidence="5">
    <location>
        <begin position="627"/>
        <end position="654"/>
    </location>
</feature>
<feature type="binding site" evidence="2">
    <location>
        <begin position="413"/>
        <end position="420"/>
    </location>
    <ligand>
        <name>ATP</name>
        <dbReference type="ChEBI" id="CHEBI:30616"/>
    </ligand>
</feature>
<feature type="binding site" evidence="2">
    <location>
        <begin position="1078"/>
        <end position="1085"/>
    </location>
    <ligand>
        <name>ATP</name>
        <dbReference type="ChEBI" id="CHEBI:30616"/>
    </ligand>
</feature>
<feature type="glycosylation site" description="N-linked (GlcNAc...) asparagine" evidence="4">
    <location>
        <position position="467"/>
    </location>
</feature>
<feature type="glycosylation site" description="N-linked (GlcNAc...) asparagine" evidence="4">
    <location>
        <position position="1037"/>
    </location>
</feature>
<feature type="glycosylation site" description="N-linked (GlcNAc...) asparagine" evidence="4">
    <location>
        <position position="1138"/>
    </location>
</feature>
<proteinExistence type="evidence at transcript level"/>
<gene>
    <name evidence="9" type="primary">fsqE</name>
    <name evidence="8" type="synonym">fmpD</name>
    <name type="ORF">AFUA_6G03470</name>
</gene>
<sequence length="1285" mass="139635">MTPPQMVSQLDDARLDERQRAILDRQLHGLGGETKQRKNVFAYATVSDRIVLSVSSICAVLAGALNPLVPVIYGLLVSVYDGFAAGTVSASELRSKTATFSLYYVYLSIGLFAFTYVATVGFYYTGERMARALRTTYLAAILRQNMAFFDLLGPGEITSRIMSDMGTVQEAVTSKLAVMLTAIATFCAAFVVAFIMYWKTALIISPFFVIMIVTETLGGAYMVRHHKRAMELYSQAAGIAEEAIAAIKHVTAFGIQTLLSQRYLSVLEQAAKADRKAENMVAGMIAWMNAMPNLIYALAFWAGSIYLTRGQMSVAEVSATTLAVTIGSFAIIRIAPSAQALLSGIAITGEILKSIARRSPQDPLVKEGDEPSTVVGDIVLDRVGLIYPSRDDVDILQDVSLRCAAMKKTAIVGSSGSGKSSILGLVERFYEPTSGTVLLDGRDIQSLNLRWLRRQIALVDQMPVLFNATILENILYGCSDMVSQWSESEQLDRVVQASKKANAHDFISALPDGYHTHVGEKGLQLSGGQRQRVAIARALIRDPKILLLDEATSALDSKSEAMVQEALDAAAEHRTTIIVAHRLSTIQNADHIIVLDHGKVVEEGTHHALVAQNGAYAALVQKQQIGDTHDHKAPDGARLSIEDDDDEDSRYGGNTEYVDEKDIRTEEVALSSAAHDEGTQRDSLKLSALQTIAFIARLSKRDWKVLLFGLANAILAGLTIPVQSVFFAKILTVIGFPPPQYPQLRSEVDFWSGLYVMLTGTTFLFWMGVEIALSYATQKLARRVREVCFRSILVQDMAFFDVPGNSPSALSSVLSKSTNDLAGLGGPVMGGILTFLSTILAGIVLALAIGWKLALVCTATIPIVVACGWLRLQVLSTFDSKVRQSGIESAAYAGELVRTVRTVASLGLEEHALARYEGILAKQAAKSLRSILLASALYAASASVVYLCAALAFWYGGTLIASHEYSTFQVYICFVSLISGSQIAGSIFTYAPDASKAMHASREIQDIMNLKPSINKVAPTGPPPAHEGTEKNQPQQNLSACRVEFEHVSFTYPSRPTRRALDNLHITVEPGQTLALVGQSGSGKSTCVSLLERFYDPDQGRILIDGQDIKLRDVDEYRRDISLVSQETIIFSGTIRDNITVGLAGQEVSDDEILEACKQANILEFVQSLPDGLSTLVGTGGSMLSGGQKQRIAIARAFLRKPKILLLDEATSALDSQSEAIVQEAMDAIRKDRTTIMVAHRLSTVQNADVICVLQDGKLLEIGTHEQLLGKRGKYWEMVSMQSLH</sequence>
<dbReference type="EMBL" id="AAHF01000012">
    <property type="protein sequence ID" value="EAL85692.1"/>
    <property type="molecule type" value="Genomic_DNA"/>
</dbReference>
<dbReference type="RefSeq" id="XP_747730.1">
    <property type="nucleotide sequence ID" value="XM_742637.1"/>
</dbReference>
<dbReference type="SMR" id="Q4WD46"/>
<dbReference type="STRING" id="330879.Q4WD46"/>
<dbReference type="GlyCosmos" id="Q4WD46">
    <property type="glycosylation" value="3 sites, No reported glycans"/>
</dbReference>
<dbReference type="EnsemblFungi" id="EAL85692">
    <property type="protein sequence ID" value="EAL85692"/>
    <property type="gene ID" value="AFUA_6G03470"/>
</dbReference>
<dbReference type="GeneID" id="3505177"/>
<dbReference type="KEGG" id="afm:AFUA_6G03470"/>
<dbReference type="VEuPathDB" id="FungiDB:Afu6g03470"/>
<dbReference type="eggNOG" id="KOG0055">
    <property type="taxonomic scope" value="Eukaryota"/>
</dbReference>
<dbReference type="HOGENOM" id="CLU_000604_17_2_1"/>
<dbReference type="InParanoid" id="Q4WD46"/>
<dbReference type="OMA" id="IEFHNTV"/>
<dbReference type="OrthoDB" id="6500128at2759"/>
<dbReference type="Proteomes" id="UP000002530">
    <property type="component" value="Chromosome 6"/>
</dbReference>
<dbReference type="GO" id="GO:0016020">
    <property type="term" value="C:membrane"/>
    <property type="evidence" value="ECO:0000318"/>
    <property type="project" value="GO_Central"/>
</dbReference>
<dbReference type="GO" id="GO:0140359">
    <property type="term" value="F:ABC-type transporter activity"/>
    <property type="evidence" value="ECO:0007669"/>
    <property type="project" value="InterPro"/>
</dbReference>
<dbReference type="GO" id="GO:0005524">
    <property type="term" value="F:ATP binding"/>
    <property type="evidence" value="ECO:0007669"/>
    <property type="project" value="UniProtKB-KW"/>
</dbReference>
<dbReference type="GO" id="GO:0016887">
    <property type="term" value="F:ATP hydrolysis activity"/>
    <property type="evidence" value="ECO:0007669"/>
    <property type="project" value="InterPro"/>
</dbReference>
<dbReference type="GO" id="GO:0042626">
    <property type="term" value="F:ATPase-coupled transmembrane transporter activity"/>
    <property type="evidence" value="ECO:0000318"/>
    <property type="project" value="GO_Central"/>
</dbReference>
<dbReference type="GO" id="GO:0055085">
    <property type="term" value="P:transmembrane transport"/>
    <property type="evidence" value="ECO:0000318"/>
    <property type="project" value="GO_Central"/>
</dbReference>
<dbReference type="CDD" id="cd18577">
    <property type="entry name" value="ABC_6TM_Pgp_ABCB1_D1_like"/>
    <property type="match status" value="1"/>
</dbReference>
<dbReference type="CDD" id="cd18578">
    <property type="entry name" value="ABC_6TM_Pgp_ABCB1_D2_like"/>
    <property type="match status" value="1"/>
</dbReference>
<dbReference type="CDD" id="cd03249">
    <property type="entry name" value="ABC_MTABC3_MDL1_MDL2"/>
    <property type="match status" value="2"/>
</dbReference>
<dbReference type="FunFam" id="3.40.50.300:FF:000967">
    <property type="entry name" value="ABC multidrug transporter mdr4"/>
    <property type="match status" value="1"/>
</dbReference>
<dbReference type="FunFam" id="3.40.50.300:FF:000240">
    <property type="entry name" value="ABC transporter B family member 20"/>
    <property type="match status" value="1"/>
</dbReference>
<dbReference type="Gene3D" id="1.20.1560.10">
    <property type="entry name" value="ABC transporter type 1, transmembrane domain"/>
    <property type="match status" value="2"/>
</dbReference>
<dbReference type="Gene3D" id="3.40.50.300">
    <property type="entry name" value="P-loop containing nucleotide triphosphate hydrolases"/>
    <property type="match status" value="2"/>
</dbReference>
<dbReference type="InterPro" id="IPR003593">
    <property type="entry name" value="AAA+_ATPase"/>
</dbReference>
<dbReference type="InterPro" id="IPR011527">
    <property type="entry name" value="ABC1_TM_dom"/>
</dbReference>
<dbReference type="InterPro" id="IPR036640">
    <property type="entry name" value="ABC1_TM_sf"/>
</dbReference>
<dbReference type="InterPro" id="IPR003439">
    <property type="entry name" value="ABC_transporter-like_ATP-bd"/>
</dbReference>
<dbReference type="InterPro" id="IPR017871">
    <property type="entry name" value="ABC_transporter-like_CS"/>
</dbReference>
<dbReference type="InterPro" id="IPR027417">
    <property type="entry name" value="P-loop_NTPase"/>
</dbReference>
<dbReference type="InterPro" id="IPR039421">
    <property type="entry name" value="Type_1_exporter"/>
</dbReference>
<dbReference type="PANTHER" id="PTHR43394:SF11">
    <property type="entry name" value="ATP-BINDING CASSETTE TRANSPORTER"/>
    <property type="match status" value="1"/>
</dbReference>
<dbReference type="PANTHER" id="PTHR43394">
    <property type="entry name" value="ATP-DEPENDENT PERMEASE MDL1, MITOCHONDRIAL"/>
    <property type="match status" value="1"/>
</dbReference>
<dbReference type="Pfam" id="PF00664">
    <property type="entry name" value="ABC_membrane"/>
    <property type="match status" value="2"/>
</dbReference>
<dbReference type="Pfam" id="PF00005">
    <property type="entry name" value="ABC_tran"/>
    <property type="match status" value="2"/>
</dbReference>
<dbReference type="SMART" id="SM00382">
    <property type="entry name" value="AAA"/>
    <property type="match status" value="2"/>
</dbReference>
<dbReference type="SUPFAM" id="SSF90123">
    <property type="entry name" value="ABC transporter transmembrane region"/>
    <property type="match status" value="2"/>
</dbReference>
<dbReference type="SUPFAM" id="SSF52540">
    <property type="entry name" value="P-loop containing nucleoside triphosphate hydrolases"/>
    <property type="match status" value="2"/>
</dbReference>
<dbReference type="PROSITE" id="PS50929">
    <property type="entry name" value="ABC_TM1F"/>
    <property type="match status" value="2"/>
</dbReference>
<dbReference type="PROSITE" id="PS00211">
    <property type="entry name" value="ABC_TRANSPORTER_1"/>
    <property type="match status" value="2"/>
</dbReference>
<dbReference type="PROSITE" id="PS50893">
    <property type="entry name" value="ABC_TRANSPORTER_2"/>
    <property type="match status" value="2"/>
</dbReference>
<protein>
    <recommendedName>
        <fullName evidence="9">ABC-type transporter fsqE</fullName>
    </recommendedName>
    <alternativeName>
        <fullName evidence="8">Fumipyrrole biosynthesis protein D</fullName>
    </alternativeName>
    <alternativeName>
        <fullName evidence="9">Fumisoquins biosynthesis protein E</fullName>
    </alternativeName>
</protein>
<accession>Q4WD46</accession>
<comment type="function">
    <text evidence="6 7 12">ABC-type transporter; part of the gene cluster that mediates the biosynthesis of the isoquinoline alkaloids fumisoquin A, fumisoquin B and fumisoquin C; as well as small amounts of fumipyrrole as a shunt metabolite (PubMed:25582336, PubMed:27065235). The products of the cluster lead to a brown coloration and are important for growth and conidiation (PubMed:25582336). FsqE possibly plays a role of self-protection (Probable).</text>
</comment>
<comment type="pathway">
    <text evidence="11">Secondary metabolite biosynthesis.</text>
</comment>
<comment type="subcellular location">
    <subcellularLocation>
        <location evidence="1">Membrane</location>
        <topology evidence="1">Multi-pass membrane protein</topology>
    </subcellularLocation>
</comment>
<comment type="induction">
    <text evidence="6 7">Expression is positively regulated by the fumisoquins biosynthesis specific transcription factor fsqA (PubMed:25582336).</text>
</comment>
<comment type="similarity">
    <text evidence="10">Belongs to the ABC transporter superfamily. ABCB family. Multidrug resistance exporter (TC 3.A.1.201) subfamily.</text>
</comment>
<evidence type="ECO:0000255" key="1"/>
<evidence type="ECO:0000255" key="2">
    <source>
        <dbReference type="PROSITE-ProRule" id="PRU00434"/>
    </source>
</evidence>
<evidence type="ECO:0000255" key="3">
    <source>
        <dbReference type="PROSITE-ProRule" id="PRU00441"/>
    </source>
</evidence>
<evidence type="ECO:0000255" key="4">
    <source>
        <dbReference type="PROSITE-ProRule" id="PRU00498"/>
    </source>
</evidence>
<evidence type="ECO:0000256" key="5">
    <source>
        <dbReference type="SAM" id="MobiDB-lite"/>
    </source>
</evidence>
<evidence type="ECO:0000269" key="6">
    <source>
    </source>
</evidence>
<evidence type="ECO:0000269" key="7">
    <source>
    </source>
</evidence>
<evidence type="ECO:0000303" key="8">
    <source>
    </source>
</evidence>
<evidence type="ECO:0000303" key="9">
    <source>
    </source>
</evidence>
<evidence type="ECO:0000305" key="10"/>
<evidence type="ECO:0000305" key="11">
    <source>
    </source>
</evidence>
<evidence type="ECO:0000305" key="12">
    <source>
    </source>
</evidence>
<name>FSQE_ASPFU</name>
<keyword id="KW-0067">ATP-binding</keyword>
<keyword id="KW-0325">Glycoprotein</keyword>
<keyword id="KW-0472">Membrane</keyword>
<keyword id="KW-0547">Nucleotide-binding</keyword>
<keyword id="KW-1185">Reference proteome</keyword>
<keyword id="KW-0677">Repeat</keyword>
<keyword id="KW-0812">Transmembrane</keyword>
<keyword id="KW-1133">Transmembrane helix</keyword>
<keyword id="KW-0813">Transport</keyword>
<organism>
    <name type="scientific">Aspergillus fumigatus (strain ATCC MYA-4609 / CBS 101355 / FGSC A1100 / Af293)</name>
    <name type="common">Neosartorya fumigata</name>
    <dbReference type="NCBI Taxonomy" id="330879"/>
    <lineage>
        <taxon>Eukaryota</taxon>
        <taxon>Fungi</taxon>
        <taxon>Dikarya</taxon>
        <taxon>Ascomycota</taxon>
        <taxon>Pezizomycotina</taxon>
        <taxon>Eurotiomycetes</taxon>
        <taxon>Eurotiomycetidae</taxon>
        <taxon>Eurotiales</taxon>
        <taxon>Aspergillaceae</taxon>
        <taxon>Aspergillus</taxon>
        <taxon>Aspergillus subgen. Fumigati</taxon>
    </lineage>
</organism>
<reference key="1">
    <citation type="journal article" date="2005" name="Nature">
        <title>Genomic sequence of the pathogenic and allergenic filamentous fungus Aspergillus fumigatus.</title>
        <authorList>
            <person name="Nierman W.C."/>
            <person name="Pain A."/>
            <person name="Anderson M.J."/>
            <person name="Wortman J.R."/>
            <person name="Kim H.S."/>
            <person name="Arroyo J."/>
            <person name="Berriman M."/>
            <person name="Abe K."/>
            <person name="Archer D.B."/>
            <person name="Bermejo C."/>
            <person name="Bennett J.W."/>
            <person name="Bowyer P."/>
            <person name="Chen D."/>
            <person name="Collins M."/>
            <person name="Coulsen R."/>
            <person name="Davies R."/>
            <person name="Dyer P.S."/>
            <person name="Farman M.L."/>
            <person name="Fedorova N."/>
            <person name="Fedorova N.D."/>
            <person name="Feldblyum T.V."/>
            <person name="Fischer R."/>
            <person name="Fosker N."/>
            <person name="Fraser A."/>
            <person name="Garcia J.L."/>
            <person name="Garcia M.J."/>
            <person name="Goble A."/>
            <person name="Goldman G.H."/>
            <person name="Gomi K."/>
            <person name="Griffith-Jones S."/>
            <person name="Gwilliam R."/>
            <person name="Haas B.J."/>
            <person name="Haas H."/>
            <person name="Harris D.E."/>
            <person name="Horiuchi H."/>
            <person name="Huang J."/>
            <person name="Humphray S."/>
            <person name="Jimenez J."/>
            <person name="Keller N."/>
            <person name="Khouri H."/>
            <person name="Kitamoto K."/>
            <person name="Kobayashi T."/>
            <person name="Konzack S."/>
            <person name="Kulkarni R."/>
            <person name="Kumagai T."/>
            <person name="Lafton A."/>
            <person name="Latge J.-P."/>
            <person name="Li W."/>
            <person name="Lord A."/>
            <person name="Lu C."/>
            <person name="Majoros W.H."/>
            <person name="May G.S."/>
            <person name="Miller B.L."/>
            <person name="Mohamoud Y."/>
            <person name="Molina M."/>
            <person name="Monod M."/>
            <person name="Mouyna I."/>
            <person name="Mulligan S."/>
            <person name="Murphy L.D."/>
            <person name="O'Neil S."/>
            <person name="Paulsen I."/>
            <person name="Penalva M.A."/>
            <person name="Pertea M."/>
            <person name="Price C."/>
            <person name="Pritchard B.L."/>
            <person name="Quail M.A."/>
            <person name="Rabbinowitsch E."/>
            <person name="Rawlins N."/>
            <person name="Rajandream M.A."/>
            <person name="Reichard U."/>
            <person name="Renauld H."/>
            <person name="Robson G.D."/>
            <person name="Rodriguez de Cordoba S."/>
            <person name="Rodriguez-Pena J.M."/>
            <person name="Ronning C.M."/>
            <person name="Rutter S."/>
            <person name="Salzberg S.L."/>
            <person name="Sanchez M."/>
            <person name="Sanchez-Ferrero J.C."/>
            <person name="Saunders D."/>
            <person name="Seeger K."/>
            <person name="Squares R."/>
            <person name="Squares S."/>
            <person name="Takeuchi M."/>
            <person name="Tekaia F."/>
            <person name="Turner G."/>
            <person name="Vazquez de Aldana C.R."/>
            <person name="Weidman J."/>
            <person name="White O."/>
            <person name="Woodward J.R."/>
            <person name="Yu J.-H."/>
            <person name="Fraser C.M."/>
            <person name="Galagan J.E."/>
            <person name="Asai K."/>
            <person name="Machida M."/>
            <person name="Hall N."/>
            <person name="Barrell B.G."/>
            <person name="Denning D.W."/>
        </authorList>
    </citation>
    <scope>NUCLEOTIDE SEQUENCE [LARGE SCALE GENOMIC DNA]</scope>
    <source>
        <strain>ATCC MYA-4609 / CBS 101355 / FGSC A1100 / Af293</strain>
    </source>
</reference>
<reference key="2">
    <citation type="journal article" date="2015" name="Mol. Microbiol.">
        <title>Transcriptome analysis of cyclic AMP-dependent protein kinase A-regulated genes reveals the production of the novel natural compound fumipyrrole by Aspergillus fumigatus.</title>
        <authorList>
            <person name="Macheleidt J."/>
            <person name="Scherlach K."/>
            <person name="Neuwirth T."/>
            <person name="Schmidt-Heck W."/>
            <person name="Strassburger M."/>
            <person name="Spraker J."/>
            <person name="Baccile J.A."/>
            <person name="Schroeder F.C."/>
            <person name="Keller N.P."/>
            <person name="Hertweck C."/>
            <person name="Heinekamp T."/>
            <person name="Brakhage A.A."/>
        </authorList>
    </citation>
    <scope>FUNCTION</scope>
    <scope>INDUCTION</scope>
</reference>
<reference key="3">
    <citation type="journal article" date="2016" name="Nat. Chem. Biol.">
        <title>Plant-like biosynthesis of isoquinoline alkaloids in Aspergillus fumigatus.</title>
        <authorList>
            <person name="Baccile J.A."/>
            <person name="Spraker J.E."/>
            <person name="Le H.H."/>
            <person name="Brandenburger E."/>
            <person name="Gomez C."/>
            <person name="Bok J.W."/>
            <person name="Macheleidt J."/>
            <person name="Brakhage A.A."/>
            <person name="Hoffmeister D."/>
            <person name="Keller N.P."/>
            <person name="Schroeder F.C."/>
        </authorList>
    </citation>
    <scope>FUNCTION</scope>
</reference>